<gene>
    <name type="primary">prsW</name>
    <name type="ordered locus">BH1625</name>
</gene>
<reference key="1">
    <citation type="journal article" date="2000" name="Nucleic Acids Res.">
        <title>Complete genome sequence of the alkaliphilic bacterium Bacillus halodurans and genomic sequence comparison with Bacillus subtilis.</title>
        <authorList>
            <person name="Takami H."/>
            <person name="Nakasone K."/>
            <person name="Takaki Y."/>
            <person name="Maeno G."/>
            <person name="Sasaki R."/>
            <person name="Masui N."/>
            <person name="Fuji F."/>
            <person name="Hirama C."/>
            <person name="Nakamura Y."/>
            <person name="Ogasawara N."/>
            <person name="Kuhara S."/>
            <person name="Horikoshi K."/>
        </authorList>
    </citation>
    <scope>NUCLEOTIDE SEQUENCE [LARGE SCALE GENOMIC DNA]</scope>
    <source>
        <strain>ATCC BAA-125 / DSM 18197 / FERM 7344 / JCM 9153 / C-125</strain>
    </source>
</reference>
<dbReference type="EC" id="3.4.-.-"/>
<dbReference type="EMBL" id="BA000004">
    <property type="protein sequence ID" value="BAB05344.1"/>
    <property type="molecule type" value="Genomic_DNA"/>
</dbReference>
<dbReference type="PIR" id="A83853">
    <property type="entry name" value="A83853"/>
</dbReference>
<dbReference type="RefSeq" id="WP_010897788.1">
    <property type="nucleotide sequence ID" value="NC_002570.2"/>
</dbReference>
<dbReference type="STRING" id="272558.gene:10727523"/>
<dbReference type="KEGG" id="bha:BH1625"/>
<dbReference type="eggNOG" id="COG2339">
    <property type="taxonomic scope" value="Bacteria"/>
</dbReference>
<dbReference type="HOGENOM" id="CLU_081250_0_0_9"/>
<dbReference type="OrthoDB" id="5504276at2"/>
<dbReference type="Proteomes" id="UP000001258">
    <property type="component" value="Chromosome"/>
</dbReference>
<dbReference type="GO" id="GO:0005886">
    <property type="term" value="C:plasma membrane"/>
    <property type="evidence" value="ECO:0007669"/>
    <property type="project" value="UniProtKB-SubCell"/>
</dbReference>
<dbReference type="GO" id="GO:0008233">
    <property type="term" value="F:peptidase activity"/>
    <property type="evidence" value="ECO:0007669"/>
    <property type="project" value="UniProtKB-KW"/>
</dbReference>
<dbReference type="GO" id="GO:0006508">
    <property type="term" value="P:proteolysis"/>
    <property type="evidence" value="ECO:0007669"/>
    <property type="project" value="UniProtKB-KW"/>
</dbReference>
<dbReference type="InterPro" id="IPR023596">
    <property type="entry name" value="Peptidase_PrsW_arch/bac"/>
</dbReference>
<dbReference type="InterPro" id="IPR026898">
    <property type="entry name" value="PrsW"/>
</dbReference>
<dbReference type="NCBIfam" id="NF033739">
    <property type="entry name" value="intramemb_PrsW"/>
    <property type="match status" value="1"/>
</dbReference>
<dbReference type="PANTHER" id="PTHR36844">
    <property type="entry name" value="PROTEASE PRSW"/>
    <property type="match status" value="1"/>
</dbReference>
<dbReference type="PANTHER" id="PTHR36844:SF1">
    <property type="entry name" value="PROTEASE PRSW"/>
    <property type="match status" value="1"/>
</dbReference>
<dbReference type="Pfam" id="PF13367">
    <property type="entry name" value="PrsW-protease"/>
    <property type="match status" value="1"/>
</dbReference>
<dbReference type="PIRSF" id="PIRSF016933">
    <property type="entry name" value="PrsW"/>
    <property type="match status" value="1"/>
</dbReference>
<comment type="function">
    <text evidence="1">Involved in the degradation of specific anti-sigma factors. Responsible for Site-1 cleavage of the RsiW anti-sigma factor. This results, after two other proteolytic steps catalyzed by the RasP and ClpXP proteases, in the release of SigW and the transcription activation of the genes under the control of the sigma-W factor (By similarity).</text>
</comment>
<comment type="subcellular location">
    <subcellularLocation>
        <location evidence="3">Cell membrane</location>
        <topology evidence="3">Multi-pass membrane protein</topology>
    </subcellularLocation>
</comment>
<comment type="similarity">
    <text evidence="3">Belongs to the protease PrsW family.</text>
</comment>
<feature type="chain" id="PRO_0000248134" description="Protease PrsW">
    <location>
        <begin position="1"/>
        <end position="215"/>
    </location>
</feature>
<feature type="transmembrane region" description="Helical" evidence="2">
    <location>
        <begin position="1"/>
        <end position="23"/>
    </location>
</feature>
<feature type="topological domain" description="Cytoplasmic" evidence="2">
    <location>
        <begin position="24"/>
        <end position="30"/>
    </location>
</feature>
<feature type="transmembrane region" description="Helical" evidence="2">
    <location>
        <begin position="31"/>
        <end position="53"/>
    </location>
</feature>
<feature type="topological domain" description="Extracellular" evidence="2">
    <location>
        <begin position="54"/>
        <end position="99"/>
    </location>
</feature>
<feature type="transmembrane region" description="Helical" evidence="2">
    <location>
        <begin position="100"/>
        <end position="121"/>
    </location>
</feature>
<feature type="topological domain" description="Cytoplasmic" evidence="2">
    <location>
        <begin position="122"/>
        <end position="129"/>
    </location>
</feature>
<feature type="transmembrane region" description="Helical" evidence="2">
    <location>
        <begin position="130"/>
        <end position="151"/>
    </location>
</feature>
<feature type="topological domain" description="Extracellular" evidence="2">
    <location>
        <begin position="152"/>
        <end position="179"/>
    </location>
</feature>
<feature type="transmembrane region" description="Helical" evidence="2">
    <location>
        <begin position="180"/>
        <end position="203"/>
    </location>
</feature>
<feature type="topological domain" description="Cytoplasmic" evidence="2">
    <location>
        <begin position="204"/>
        <end position="215"/>
    </location>
</feature>
<organism>
    <name type="scientific">Halalkalibacterium halodurans (strain ATCC BAA-125 / DSM 18197 / FERM 7344 / JCM 9153 / C-125)</name>
    <name type="common">Bacillus halodurans</name>
    <dbReference type="NCBI Taxonomy" id="272558"/>
    <lineage>
        <taxon>Bacteria</taxon>
        <taxon>Bacillati</taxon>
        <taxon>Bacillota</taxon>
        <taxon>Bacilli</taxon>
        <taxon>Bacillales</taxon>
        <taxon>Bacillaceae</taxon>
        <taxon>Halalkalibacterium (ex Joshi et al. 2022)</taxon>
    </lineage>
</organism>
<keyword id="KW-1003">Cell membrane</keyword>
<keyword id="KW-0378">Hydrolase</keyword>
<keyword id="KW-0472">Membrane</keyword>
<keyword id="KW-0645">Protease</keyword>
<keyword id="KW-1185">Reference proteome</keyword>
<keyword id="KW-0812">Transmembrane</keyword>
<keyword id="KW-1133">Transmembrane helix</keyword>
<protein>
    <recommendedName>
        <fullName>Protease PrsW</fullName>
        <ecNumber>3.4.-.-</ecNumber>
    </recommendedName>
    <alternativeName>
        <fullName>Protease responsible for activating sigma-W</fullName>
    </alternativeName>
</protein>
<proteinExistence type="inferred from homology"/>
<accession>Q9KCE6</accession>
<name>PRSW_HALH5</name>
<sequence length="215" mass="24818">MFSLLTAAIAPAMALLCFFYLKNEYGSQTLGFVVRTFLIGALLMFPVMVLQHAFLAEGFFANPLLKAFILYGFFEEFFKWFMLYFFAYKHVEFNRRYDGIIFGVSLSLGFASMENGLYLIANGVETALGRALLPVSSHAIYGVIMGYYLGRAKMEEKHRKKWLVLSLFLPVLLHSLYDAILLLWSKHFLFVMVPFMLVLWWVAIQKVKLANQLDR</sequence>
<evidence type="ECO:0000250" key="1"/>
<evidence type="ECO:0000255" key="2"/>
<evidence type="ECO:0000305" key="3"/>